<accession>C0Z6T0</accession>
<dbReference type="EC" id="2.7.2.8" evidence="1"/>
<dbReference type="EMBL" id="AP008955">
    <property type="protein sequence ID" value="BAH46279.1"/>
    <property type="molecule type" value="Genomic_DNA"/>
</dbReference>
<dbReference type="RefSeq" id="WP_015893528.1">
    <property type="nucleotide sequence ID" value="NC_012491.1"/>
</dbReference>
<dbReference type="SMR" id="C0Z6T0"/>
<dbReference type="STRING" id="358681.BBR47_53020"/>
<dbReference type="KEGG" id="bbe:BBR47_53020"/>
<dbReference type="eggNOG" id="COG0548">
    <property type="taxonomic scope" value="Bacteria"/>
</dbReference>
<dbReference type="HOGENOM" id="CLU_053680_1_0_9"/>
<dbReference type="UniPathway" id="UPA00068">
    <property type="reaction ID" value="UER00107"/>
</dbReference>
<dbReference type="Proteomes" id="UP000001877">
    <property type="component" value="Chromosome"/>
</dbReference>
<dbReference type="GO" id="GO:0005737">
    <property type="term" value="C:cytoplasm"/>
    <property type="evidence" value="ECO:0007669"/>
    <property type="project" value="UniProtKB-SubCell"/>
</dbReference>
<dbReference type="GO" id="GO:0003991">
    <property type="term" value="F:acetylglutamate kinase activity"/>
    <property type="evidence" value="ECO:0007669"/>
    <property type="project" value="UniProtKB-UniRule"/>
</dbReference>
<dbReference type="GO" id="GO:0005524">
    <property type="term" value="F:ATP binding"/>
    <property type="evidence" value="ECO:0007669"/>
    <property type="project" value="UniProtKB-UniRule"/>
</dbReference>
<dbReference type="GO" id="GO:0042450">
    <property type="term" value="P:arginine biosynthetic process via ornithine"/>
    <property type="evidence" value="ECO:0007669"/>
    <property type="project" value="UniProtKB-UniRule"/>
</dbReference>
<dbReference type="GO" id="GO:0006526">
    <property type="term" value="P:L-arginine biosynthetic process"/>
    <property type="evidence" value="ECO:0007669"/>
    <property type="project" value="UniProtKB-UniPathway"/>
</dbReference>
<dbReference type="CDD" id="cd04238">
    <property type="entry name" value="AAK_NAGK-like"/>
    <property type="match status" value="1"/>
</dbReference>
<dbReference type="FunFam" id="3.40.1160.10:FF:000004">
    <property type="entry name" value="Acetylglutamate kinase"/>
    <property type="match status" value="1"/>
</dbReference>
<dbReference type="Gene3D" id="3.40.1160.10">
    <property type="entry name" value="Acetylglutamate kinase-like"/>
    <property type="match status" value="1"/>
</dbReference>
<dbReference type="HAMAP" id="MF_00082">
    <property type="entry name" value="ArgB"/>
    <property type="match status" value="1"/>
</dbReference>
<dbReference type="InterPro" id="IPR036393">
    <property type="entry name" value="AceGlu_kinase-like_sf"/>
</dbReference>
<dbReference type="InterPro" id="IPR004662">
    <property type="entry name" value="AcgluKinase_fam"/>
</dbReference>
<dbReference type="InterPro" id="IPR037528">
    <property type="entry name" value="ArgB"/>
</dbReference>
<dbReference type="InterPro" id="IPR001048">
    <property type="entry name" value="Asp/Glu/Uridylate_kinase"/>
</dbReference>
<dbReference type="InterPro" id="IPR001057">
    <property type="entry name" value="Glu/AcGlu_kinase"/>
</dbReference>
<dbReference type="NCBIfam" id="TIGR00761">
    <property type="entry name" value="argB"/>
    <property type="match status" value="1"/>
</dbReference>
<dbReference type="PANTHER" id="PTHR23342">
    <property type="entry name" value="N-ACETYLGLUTAMATE SYNTHASE"/>
    <property type="match status" value="1"/>
</dbReference>
<dbReference type="PANTHER" id="PTHR23342:SF0">
    <property type="entry name" value="N-ACETYLGLUTAMATE SYNTHASE, MITOCHONDRIAL"/>
    <property type="match status" value="1"/>
</dbReference>
<dbReference type="Pfam" id="PF00696">
    <property type="entry name" value="AA_kinase"/>
    <property type="match status" value="1"/>
</dbReference>
<dbReference type="PIRSF" id="PIRSF000728">
    <property type="entry name" value="NAGK"/>
    <property type="match status" value="1"/>
</dbReference>
<dbReference type="PRINTS" id="PR00474">
    <property type="entry name" value="GLU5KINASE"/>
</dbReference>
<dbReference type="SUPFAM" id="SSF53633">
    <property type="entry name" value="Carbamate kinase-like"/>
    <property type="match status" value="1"/>
</dbReference>
<comment type="function">
    <text evidence="1">Catalyzes the ATP-dependent phosphorylation of N-acetyl-L-glutamate.</text>
</comment>
<comment type="catalytic activity">
    <reaction evidence="1">
        <text>N-acetyl-L-glutamate + ATP = N-acetyl-L-glutamyl 5-phosphate + ADP</text>
        <dbReference type="Rhea" id="RHEA:14629"/>
        <dbReference type="ChEBI" id="CHEBI:30616"/>
        <dbReference type="ChEBI" id="CHEBI:44337"/>
        <dbReference type="ChEBI" id="CHEBI:57936"/>
        <dbReference type="ChEBI" id="CHEBI:456216"/>
        <dbReference type="EC" id="2.7.2.8"/>
    </reaction>
</comment>
<comment type="pathway">
    <text evidence="1">Amino-acid biosynthesis; L-arginine biosynthesis; N(2)-acetyl-L-ornithine from L-glutamate: step 2/4.</text>
</comment>
<comment type="subcellular location">
    <subcellularLocation>
        <location evidence="1">Cytoplasm</location>
    </subcellularLocation>
</comment>
<comment type="similarity">
    <text evidence="1">Belongs to the acetylglutamate kinase family. ArgB subfamily.</text>
</comment>
<reference key="1">
    <citation type="submission" date="2005-03" db="EMBL/GenBank/DDBJ databases">
        <title>Brevibacillus brevis strain 47, complete genome.</title>
        <authorList>
            <person name="Hosoyama A."/>
            <person name="Yamada R."/>
            <person name="Hongo Y."/>
            <person name="Terui Y."/>
            <person name="Ankai A."/>
            <person name="Masuyama W."/>
            <person name="Sekiguchi M."/>
            <person name="Takeda T."/>
            <person name="Asano K."/>
            <person name="Ohji S."/>
            <person name="Ichikawa N."/>
            <person name="Narita S."/>
            <person name="Aoki N."/>
            <person name="Miura H."/>
            <person name="Matsushita S."/>
            <person name="Sekigawa T."/>
            <person name="Yamagata H."/>
            <person name="Yoshikawa H."/>
            <person name="Udaka S."/>
            <person name="Tanikawa S."/>
            <person name="Fujita N."/>
        </authorList>
    </citation>
    <scope>NUCLEOTIDE SEQUENCE [LARGE SCALE GENOMIC DNA]</scope>
    <source>
        <strain>47 / JCM 6285 / NBRC 100599</strain>
    </source>
</reference>
<name>ARGB_BREBN</name>
<feature type="chain" id="PRO_1000118341" description="Acetylglutamate kinase">
    <location>
        <begin position="1"/>
        <end position="265"/>
    </location>
</feature>
<feature type="binding site" evidence="1">
    <location>
        <begin position="41"/>
        <end position="42"/>
    </location>
    <ligand>
        <name>substrate</name>
    </ligand>
</feature>
<feature type="binding site" evidence="1">
    <location>
        <position position="63"/>
    </location>
    <ligand>
        <name>substrate</name>
    </ligand>
</feature>
<feature type="binding site" evidence="1">
    <location>
        <position position="156"/>
    </location>
    <ligand>
        <name>substrate</name>
    </ligand>
</feature>
<feature type="site" description="Transition state stabilizer" evidence="1">
    <location>
        <position position="8"/>
    </location>
</feature>
<feature type="site" description="Transition state stabilizer" evidence="1">
    <location>
        <position position="220"/>
    </location>
</feature>
<gene>
    <name evidence="1" type="primary">argB</name>
    <name type="ordered locus">BBR47_53020</name>
</gene>
<sequence>MQGIVVIKCGGSTMDQLPDSFFQAIAGLQAQGQEIVIVHGGGPAINSMLDRVQITPQFVDGLRVTCEDTLRVVEMVLCGSINKALVKRLTQAGAKAWGVSGIDGQTLLATKTPKPLGWVGEIKKADMTIPKAILEQGFVPVIAPLSVSEDGTETYNVNADVAAGAIAAALSAEKLIMVTDVPGIMQPQPDGTKAVVSATSAEEIQEMIREEIITGGMIPKVQAALDALGQGVEQVVICRGTAEDLLGVCAGQAVGTTVRMNVNYA</sequence>
<evidence type="ECO:0000255" key="1">
    <source>
        <dbReference type="HAMAP-Rule" id="MF_00082"/>
    </source>
</evidence>
<protein>
    <recommendedName>
        <fullName evidence="1">Acetylglutamate kinase</fullName>
        <ecNumber evidence="1">2.7.2.8</ecNumber>
    </recommendedName>
    <alternativeName>
        <fullName evidence="1">N-acetyl-L-glutamate 5-phosphotransferase</fullName>
    </alternativeName>
    <alternativeName>
        <fullName evidence="1">NAG kinase</fullName>
        <shortName evidence="1">NAGK</shortName>
    </alternativeName>
</protein>
<organism>
    <name type="scientific">Brevibacillus brevis (strain 47 / JCM 6285 / NBRC 100599)</name>
    <dbReference type="NCBI Taxonomy" id="358681"/>
    <lineage>
        <taxon>Bacteria</taxon>
        <taxon>Bacillati</taxon>
        <taxon>Bacillota</taxon>
        <taxon>Bacilli</taxon>
        <taxon>Bacillales</taxon>
        <taxon>Paenibacillaceae</taxon>
        <taxon>Brevibacillus</taxon>
    </lineage>
</organism>
<proteinExistence type="inferred from homology"/>
<keyword id="KW-0028">Amino-acid biosynthesis</keyword>
<keyword id="KW-0055">Arginine biosynthesis</keyword>
<keyword id="KW-0067">ATP-binding</keyword>
<keyword id="KW-0963">Cytoplasm</keyword>
<keyword id="KW-0418">Kinase</keyword>
<keyword id="KW-0547">Nucleotide-binding</keyword>
<keyword id="KW-1185">Reference proteome</keyword>
<keyword id="KW-0808">Transferase</keyword>